<reference key="1">
    <citation type="submission" date="2009-07" db="EMBL/GenBank/DDBJ databases">
        <title>Complete sequence of Pectobacterium carotovorum subsp. carotovorum PC1.</title>
        <authorList>
            <consortium name="US DOE Joint Genome Institute"/>
            <person name="Lucas S."/>
            <person name="Copeland A."/>
            <person name="Lapidus A."/>
            <person name="Glavina del Rio T."/>
            <person name="Tice H."/>
            <person name="Bruce D."/>
            <person name="Goodwin L."/>
            <person name="Pitluck S."/>
            <person name="Munk A.C."/>
            <person name="Brettin T."/>
            <person name="Detter J.C."/>
            <person name="Han C."/>
            <person name="Tapia R."/>
            <person name="Larimer F."/>
            <person name="Land M."/>
            <person name="Hauser L."/>
            <person name="Kyrpides N."/>
            <person name="Mikhailova N."/>
            <person name="Balakrishnan V."/>
            <person name="Glasner J."/>
            <person name="Perna N.T."/>
        </authorList>
    </citation>
    <scope>NUCLEOTIDE SEQUENCE [LARGE SCALE GENOMIC DNA]</scope>
    <source>
        <strain>PC1</strain>
    </source>
</reference>
<comment type="function">
    <text evidence="1">3'-5' exonuclease that prefers single-stranded DNA and RNA. May play a role in the H(2)O(2)-induced DNA damage repair.</text>
</comment>
<comment type="cofactor">
    <cofactor evidence="1">
        <name>Mg(2+)</name>
        <dbReference type="ChEBI" id="CHEBI:18420"/>
    </cofactor>
</comment>
<comment type="subunit">
    <text evidence="1">Monomer.</text>
</comment>
<comment type="subcellular location">
    <subcellularLocation>
        <location evidence="1">Cytoplasm</location>
    </subcellularLocation>
</comment>
<comment type="similarity">
    <text evidence="1">Belongs to the metallo-dependent hydrolases superfamily. TatD-type hydrolase family. TatD subfamily.</text>
</comment>
<sequence>MFDIGVNLTSSQFEKDREQVVIRAKQAGVSGILITGTNAQESQQAMLLAQAYPDYCWSTAGVHPHDASQWNDAVAEQIHHMASADCVVAIGECGLDFNRNFSTPEEQERAFSAQLAIAAERSMPVFLHCRDAHSRFISFLTPWLNRLPAAVVHCFTGNRHELDECLAAGLMVGITGWVCDERRGLELRALLPHIPADRLLVETDAPYLLPRDLRPKPASRRNEPCYLPHIIRQIAEWRGEDATWLGQTTDENARRVFRLA</sequence>
<accession>C6DI71</accession>
<feature type="chain" id="PRO_0000412748" description="3'-5' ssDNA/RNA exonuclease TatD">
    <location>
        <begin position="1"/>
        <end position="260"/>
    </location>
</feature>
<feature type="binding site" evidence="1">
    <location>
        <position position="92"/>
    </location>
    <ligand>
        <name>a divalent metal cation</name>
        <dbReference type="ChEBI" id="CHEBI:60240"/>
    </ligand>
</feature>
<feature type="binding site" evidence="1">
    <location>
        <position position="128"/>
    </location>
    <ligand>
        <name>a divalent metal cation</name>
        <dbReference type="ChEBI" id="CHEBI:60240"/>
    </ligand>
</feature>
<feature type="binding site" evidence="1">
    <location>
        <position position="153"/>
    </location>
    <ligand>
        <name>a divalent metal cation</name>
        <dbReference type="ChEBI" id="CHEBI:60240"/>
    </ligand>
</feature>
<organism>
    <name type="scientific">Pectobacterium carotovorum subsp. carotovorum (strain PC1)</name>
    <dbReference type="NCBI Taxonomy" id="561230"/>
    <lineage>
        <taxon>Bacteria</taxon>
        <taxon>Pseudomonadati</taxon>
        <taxon>Pseudomonadota</taxon>
        <taxon>Gammaproteobacteria</taxon>
        <taxon>Enterobacterales</taxon>
        <taxon>Pectobacteriaceae</taxon>
        <taxon>Pectobacterium</taxon>
    </lineage>
</organism>
<protein>
    <recommendedName>
        <fullName evidence="1">3'-5' ssDNA/RNA exonuclease TatD</fullName>
        <ecNumber evidence="1">3.1.11.-</ecNumber>
        <ecNumber evidence="1">3.1.13.-</ecNumber>
    </recommendedName>
    <alternativeName>
        <fullName evidence="1">DNase TatD</fullName>
    </alternativeName>
</protein>
<keyword id="KW-0963">Cytoplasm</keyword>
<keyword id="KW-0269">Exonuclease</keyword>
<keyword id="KW-0378">Hydrolase</keyword>
<keyword id="KW-0460">Magnesium</keyword>
<keyword id="KW-0479">Metal-binding</keyword>
<keyword id="KW-0540">Nuclease</keyword>
<gene>
    <name evidence="1" type="primary">tatD</name>
    <name type="ordered locus">PC1_4050</name>
</gene>
<dbReference type="EC" id="3.1.11.-" evidence="1"/>
<dbReference type="EC" id="3.1.13.-" evidence="1"/>
<dbReference type="EMBL" id="CP001657">
    <property type="protein sequence ID" value="ACT15065.1"/>
    <property type="molecule type" value="Genomic_DNA"/>
</dbReference>
<dbReference type="RefSeq" id="WP_015842142.1">
    <property type="nucleotide sequence ID" value="NC_012917.1"/>
</dbReference>
<dbReference type="SMR" id="C6DI71"/>
<dbReference type="STRING" id="561230.PC1_4050"/>
<dbReference type="KEGG" id="pct:PC1_4050"/>
<dbReference type="eggNOG" id="COG0084">
    <property type="taxonomic scope" value="Bacteria"/>
</dbReference>
<dbReference type="HOGENOM" id="CLU_031506_1_2_6"/>
<dbReference type="OrthoDB" id="9810005at2"/>
<dbReference type="Proteomes" id="UP000002736">
    <property type="component" value="Chromosome"/>
</dbReference>
<dbReference type="GO" id="GO:0005737">
    <property type="term" value="C:cytoplasm"/>
    <property type="evidence" value="ECO:0007669"/>
    <property type="project" value="UniProtKB-SubCell"/>
</dbReference>
<dbReference type="GO" id="GO:0000175">
    <property type="term" value="F:3'-5'-RNA exonuclease activity"/>
    <property type="evidence" value="ECO:0007669"/>
    <property type="project" value="UniProtKB-UniRule"/>
</dbReference>
<dbReference type="GO" id="GO:0000287">
    <property type="term" value="F:magnesium ion binding"/>
    <property type="evidence" value="ECO:0007669"/>
    <property type="project" value="UniProtKB-UniRule"/>
</dbReference>
<dbReference type="GO" id="GO:0008310">
    <property type="term" value="F:single-stranded DNA 3'-5' DNA exonuclease activity"/>
    <property type="evidence" value="ECO:0007669"/>
    <property type="project" value="UniProtKB-UniRule"/>
</dbReference>
<dbReference type="CDD" id="cd01310">
    <property type="entry name" value="TatD_DNAse"/>
    <property type="match status" value="1"/>
</dbReference>
<dbReference type="FunFam" id="3.20.20.140:FF:000018">
    <property type="entry name" value="3'-5' ssDNA/RNA exonuclease TatD"/>
    <property type="match status" value="1"/>
</dbReference>
<dbReference type="Gene3D" id="3.20.20.140">
    <property type="entry name" value="Metal-dependent hydrolases"/>
    <property type="match status" value="1"/>
</dbReference>
<dbReference type="HAMAP" id="MF_00901">
    <property type="entry name" value="TatD_exonuclease"/>
    <property type="match status" value="1"/>
</dbReference>
<dbReference type="InterPro" id="IPR018228">
    <property type="entry name" value="DNase_TatD-rel_CS"/>
</dbReference>
<dbReference type="InterPro" id="IPR024918">
    <property type="entry name" value="Exonuc_TatD"/>
</dbReference>
<dbReference type="InterPro" id="IPR032466">
    <property type="entry name" value="Metal_Hydrolase"/>
</dbReference>
<dbReference type="InterPro" id="IPR001130">
    <property type="entry name" value="TatD-like"/>
</dbReference>
<dbReference type="InterPro" id="IPR050891">
    <property type="entry name" value="TatD-type_Hydrolase"/>
</dbReference>
<dbReference type="NCBIfam" id="NF007745">
    <property type="entry name" value="PRK10425.1"/>
    <property type="match status" value="1"/>
</dbReference>
<dbReference type="PANTHER" id="PTHR10060:SF15">
    <property type="entry name" value="DEOXYRIBONUCLEASE TATDN1"/>
    <property type="match status" value="1"/>
</dbReference>
<dbReference type="PANTHER" id="PTHR10060">
    <property type="entry name" value="TATD FAMILY DEOXYRIBONUCLEASE"/>
    <property type="match status" value="1"/>
</dbReference>
<dbReference type="Pfam" id="PF01026">
    <property type="entry name" value="TatD_DNase"/>
    <property type="match status" value="1"/>
</dbReference>
<dbReference type="PIRSF" id="PIRSF005902">
    <property type="entry name" value="DNase_TatD"/>
    <property type="match status" value="1"/>
</dbReference>
<dbReference type="SUPFAM" id="SSF51556">
    <property type="entry name" value="Metallo-dependent hydrolases"/>
    <property type="match status" value="1"/>
</dbReference>
<dbReference type="PROSITE" id="PS01091">
    <property type="entry name" value="TATD_3"/>
    <property type="match status" value="1"/>
</dbReference>
<evidence type="ECO:0000255" key="1">
    <source>
        <dbReference type="HAMAP-Rule" id="MF_00901"/>
    </source>
</evidence>
<name>TATD_PECCP</name>
<proteinExistence type="inferred from homology"/>